<accession>Q30TE4</accession>
<proteinExistence type="inferred from homology"/>
<organism>
    <name type="scientific">Sulfurimonas denitrificans (strain ATCC 33889 / DSM 1251)</name>
    <name type="common">Thiomicrospira denitrificans (strain ATCC 33889 / DSM 1251)</name>
    <dbReference type="NCBI Taxonomy" id="326298"/>
    <lineage>
        <taxon>Bacteria</taxon>
        <taxon>Pseudomonadati</taxon>
        <taxon>Campylobacterota</taxon>
        <taxon>Epsilonproteobacteria</taxon>
        <taxon>Campylobacterales</taxon>
        <taxon>Sulfurimonadaceae</taxon>
        <taxon>Sulfurimonas</taxon>
    </lineage>
</organism>
<reference key="1">
    <citation type="journal article" date="2008" name="Appl. Environ. Microbiol.">
        <title>Genome of the epsilonproteobacterial chemolithoautotroph Sulfurimonas denitrificans.</title>
        <authorList>
            <person name="Sievert S.M."/>
            <person name="Scott K.M."/>
            <person name="Klotz M.G."/>
            <person name="Chain P.S.G."/>
            <person name="Hauser L.J."/>
            <person name="Hemp J."/>
            <person name="Huegler M."/>
            <person name="Land M."/>
            <person name="Lapidus A."/>
            <person name="Larimer F.W."/>
            <person name="Lucas S."/>
            <person name="Malfatti S.A."/>
            <person name="Meyer F."/>
            <person name="Paulsen I.T."/>
            <person name="Ren Q."/>
            <person name="Simon J."/>
            <person name="Bailey K."/>
            <person name="Diaz E."/>
            <person name="Fitzpatrick K.A."/>
            <person name="Glover B."/>
            <person name="Gwatney N."/>
            <person name="Korajkic A."/>
            <person name="Long A."/>
            <person name="Mobberley J.M."/>
            <person name="Pantry S.N."/>
            <person name="Pazder G."/>
            <person name="Peterson S."/>
            <person name="Quintanilla J.D."/>
            <person name="Sprinkle R."/>
            <person name="Stephens J."/>
            <person name="Thomas P."/>
            <person name="Vaughn R."/>
            <person name="Weber M.J."/>
            <person name="Wooten L.L."/>
        </authorList>
    </citation>
    <scope>NUCLEOTIDE SEQUENCE [LARGE SCALE GENOMIC DNA]</scope>
    <source>
        <strain>ATCC 33889 / DSM 1251</strain>
    </source>
</reference>
<sequence>MIPKLLKHELTFPHPNDATEDGIVAWGGDLNPSRLIRAYQNGIFPWYGKNDPIIWWSPNPRLIMELDDFKLSRSLRKSMKKFEYRFDTNFINVMKNCQNIKRVKQDGTWIQDEIIEAYSVLHDMGIAHSVESYLDGELVGGLYGVAVGGLFCGESMFTLVNDASKSAYAVLINHLKIWGYDFIDAQVPTEHLKNLGAKEVSRDYFLDRLHKVNMNIINHKWELLHVNT</sequence>
<gene>
    <name evidence="1" type="primary">aat</name>
    <name type="ordered locus">Suden_0456</name>
</gene>
<name>LFTR_SULDN</name>
<dbReference type="EC" id="2.3.2.6" evidence="1"/>
<dbReference type="EMBL" id="CP000153">
    <property type="protein sequence ID" value="ABB43737.1"/>
    <property type="molecule type" value="Genomic_DNA"/>
</dbReference>
<dbReference type="RefSeq" id="WP_011372091.1">
    <property type="nucleotide sequence ID" value="NC_007575.1"/>
</dbReference>
<dbReference type="SMR" id="Q30TE4"/>
<dbReference type="STRING" id="326298.Suden_0456"/>
<dbReference type="KEGG" id="tdn:Suden_0456"/>
<dbReference type="eggNOG" id="COG2360">
    <property type="taxonomic scope" value="Bacteria"/>
</dbReference>
<dbReference type="HOGENOM" id="CLU_075045_0_0_7"/>
<dbReference type="OrthoDB" id="9790282at2"/>
<dbReference type="Proteomes" id="UP000002714">
    <property type="component" value="Chromosome"/>
</dbReference>
<dbReference type="GO" id="GO:0005737">
    <property type="term" value="C:cytoplasm"/>
    <property type="evidence" value="ECO:0007669"/>
    <property type="project" value="UniProtKB-SubCell"/>
</dbReference>
<dbReference type="GO" id="GO:0008914">
    <property type="term" value="F:leucyl-tRNA--protein transferase activity"/>
    <property type="evidence" value="ECO:0007669"/>
    <property type="project" value="UniProtKB-UniRule"/>
</dbReference>
<dbReference type="GO" id="GO:0030163">
    <property type="term" value="P:protein catabolic process"/>
    <property type="evidence" value="ECO:0007669"/>
    <property type="project" value="UniProtKB-UniRule"/>
</dbReference>
<dbReference type="FunFam" id="3.30.70.3550:FF:000001">
    <property type="entry name" value="Leucyl/phenylalanyl-tRNA--protein transferase"/>
    <property type="match status" value="1"/>
</dbReference>
<dbReference type="Gene3D" id="3.40.630.70">
    <property type="entry name" value="Leucyl/phenylalanyl-tRNA-protein transferase, C-terminal domain"/>
    <property type="match status" value="1"/>
</dbReference>
<dbReference type="Gene3D" id="3.30.70.3550">
    <property type="entry name" value="Leucyl/phenylalanyl-tRNA-protein transferase, N-terminal domain"/>
    <property type="match status" value="1"/>
</dbReference>
<dbReference type="HAMAP" id="MF_00688">
    <property type="entry name" value="Leu_Phe_trans"/>
    <property type="match status" value="1"/>
</dbReference>
<dbReference type="InterPro" id="IPR016181">
    <property type="entry name" value="Acyl_CoA_acyltransferase"/>
</dbReference>
<dbReference type="InterPro" id="IPR004616">
    <property type="entry name" value="Leu/Phe-tRNA_Trfase"/>
</dbReference>
<dbReference type="InterPro" id="IPR042203">
    <property type="entry name" value="Leu/Phe-tRNA_Trfase_C"/>
</dbReference>
<dbReference type="InterPro" id="IPR042221">
    <property type="entry name" value="Leu/Phe-tRNA_Trfase_N"/>
</dbReference>
<dbReference type="NCBIfam" id="TIGR00667">
    <property type="entry name" value="aat"/>
    <property type="match status" value="1"/>
</dbReference>
<dbReference type="PANTHER" id="PTHR30098">
    <property type="entry name" value="LEUCYL/PHENYLALANYL-TRNA--PROTEIN TRANSFERASE"/>
    <property type="match status" value="1"/>
</dbReference>
<dbReference type="PANTHER" id="PTHR30098:SF2">
    <property type="entry name" value="LEUCYL_PHENYLALANYL-TRNA--PROTEIN TRANSFERASE"/>
    <property type="match status" value="1"/>
</dbReference>
<dbReference type="Pfam" id="PF03588">
    <property type="entry name" value="Leu_Phe_trans"/>
    <property type="match status" value="1"/>
</dbReference>
<dbReference type="SUPFAM" id="SSF55729">
    <property type="entry name" value="Acyl-CoA N-acyltransferases (Nat)"/>
    <property type="match status" value="1"/>
</dbReference>
<protein>
    <recommendedName>
        <fullName evidence="1">Leucyl/phenylalanyl-tRNA--protein transferase</fullName>
        <ecNumber evidence="1">2.3.2.6</ecNumber>
    </recommendedName>
    <alternativeName>
        <fullName evidence="1">L/F-transferase</fullName>
    </alternativeName>
    <alternativeName>
        <fullName evidence="1">Leucyltransferase</fullName>
    </alternativeName>
    <alternativeName>
        <fullName evidence="1">Phenyalanyltransferase</fullName>
    </alternativeName>
</protein>
<feature type="chain" id="PRO_0000258108" description="Leucyl/phenylalanyl-tRNA--protein transferase">
    <location>
        <begin position="1"/>
        <end position="228"/>
    </location>
</feature>
<comment type="function">
    <text evidence="1">Functions in the N-end rule pathway of protein degradation where it conjugates Leu, Phe and, less efficiently, Met from aminoacyl-tRNAs to the N-termini of proteins containing an N-terminal arginine or lysine.</text>
</comment>
<comment type="catalytic activity">
    <reaction evidence="1">
        <text>N-terminal L-lysyl-[protein] + L-leucyl-tRNA(Leu) = N-terminal L-leucyl-L-lysyl-[protein] + tRNA(Leu) + H(+)</text>
        <dbReference type="Rhea" id="RHEA:12340"/>
        <dbReference type="Rhea" id="RHEA-COMP:9613"/>
        <dbReference type="Rhea" id="RHEA-COMP:9622"/>
        <dbReference type="Rhea" id="RHEA-COMP:12670"/>
        <dbReference type="Rhea" id="RHEA-COMP:12671"/>
        <dbReference type="ChEBI" id="CHEBI:15378"/>
        <dbReference type="ChEBI" id="CHEBI:65249"/>
        <dbReference type="ChEBI" id="CHEBI:78442"/>
        <dbReference type="ChEBI" id="CHEBI:78494"/>
        <dbReference type="ChEBI" id="CHEBI:133043"/>
        <dbReference type="EC" id="2.3.2.6"/>
    </reaction>
</comment>
<comment type="catalytic activity">
    <reaction evidence="1">
        <text>N-terminal L-arginyl-[protein] + L-leucyl-tRNA(Leu) = N-terminal L-leucyl-L-arginyl-[protein] + tRNA(Leu) + H(+)</text>
        <dbReference type="Rhea" id="RHEA:50416"/>
        <dbReference type="Rhea" id="RHEA-COMP:9613"/>
        <dbReference type="Rhea" id="RHEA-COMP:9622"/>
        <dbReference type="Rhea" id="RHEA-COMP:12672"/>
        <dbReference type="Rhea" id="RHEA-COMP:12673"/>
        <dbReference type="ChEBI" id="CHEBI:15378"/>
        <dbReference type="ChEBI" id="CHEBI:64719"/>
        <dbReference type="ChEBI" id="CHEBI:78442"/>
        <dbReference type="ChEBI" id="CHEBI:78494"/>
        <dbReference type="ChEBI" id="CHEBI:133044"/>
        <dbReference type="EC" id="2.3.2.6"/>
    </reaction>
</comment>
<comment type="catalytic activity">
    <reaction evidence="1">
        <text>L-phenylalanyl-tRNA(Phe) + an N-terminal L-alpha-aminoacyl-[protein] = an N-terminal L-phenylalanyl-L-alpha-aminoacyl-[protein] + tRNA(Phe)</text>
        <dbReference type="Rhea" id="RHEA:43632"/>
        <dbReference type="Rhea" id="RHEA-COMP:9668"/>
        <dbReference type="Rhea" id="RHEA-COMP:9699"/>
        <dbReference type="Rhea" id="RHEA-COMP:10636"/>
        <dbReference type="Rhea" id="RHEA-COMP:10637"/>
        <dbReference type="ChEBI" id="CHEBI:78442"/>
        <dbReference type="ChEBI" id="CHEBI:78531"/>
        <dbReference type="ChEBI" id="CHEBI:78597"/>
        <dbReference type="ChEBI" id="CHEBI:83561"/>
        <dbReference type="EC" id="2.3.2.6"/>
    </reaction>
</comment>
<comment type="subcellular location">
    <subcellularLocation>
        <location evidence="1">Cytoplasm</location>
    </subcellularLocation>
</comment>
<comment type="similarity">
    <text evidence="1">Belongs to the L/F-transferase family.</text>
</comment>
<evidence type="ECO:0000255" key="1">
    <source>
        <dbReference type="HAMAP-Rule" id="MF_00688"/>
    </source>
</evidence>
<keyword id="KW-0012">Acyltransferase</keyword>
<keyword id="KW-0963">Cytoplasm</keyword>
<keyword id="KW-1185">Reference proteome</keyword>
<keyword id="KW-0808">Transferase</keyword>